<gene>
    <name evidence="1" type="primary">rpsR</name>
    <name type="ordered locus">SPs0287</name>
</gene>
<sequence length="79" mass="9204">MAQQRRGGFKRRKKVDFIAANKIEYVDYKDTELLSRFVSERGKILPRRVTGTSAKNQRKVTTAIKRARVMALMPYVNED</sequence>
<evidence type="ECO:0000255" key="1">
    <source>
        <dbReference type="HAMAP-Rule" id="MF_00270"/>
    </source>
</evidence>
<evidence type="ECO:0000305" key="2"/>
<name>RS18_STRPQ</name>
<protein>
    <recommendedName>
        <fullName evidence="1">Small ribosomal subunit protein bS18</fullName>
    </recommendedName>
    <alternativeName>
        <fullName evidence="2">30S ribosomal protein S18</fullName>
    </alternativeName>
</protein>
<dbReference type="EMBL" id="BA000034">
    <property type="protein sequence ID" value="BAC63382.1"/>
    <property type="molecule type" value="Genomic_DNA"/>
</dbReference>
<dbReference type="RefSeq" id="WP_002983142.1">
    <property type="nucleotide sequence ID" value="NC_004606.1"/>
</dbReference>
<dbReference type="SMR" id="P0DE81"/>
<dbReference type="GeneID" id="93826879"/>
<dbReference type="KEGG" id="sps:SPs0287"/>
<dbReference type="HOGENOM" id="CLU_148710_2_2_9"/>
<dbReference type="GO" id="GO:0022627">
    <property type="term" value="C:cytosolic small ribosomal subunit"/>
    <property type="evidence" value="ECO:0007669"/>
    <property type="project" value="TreeGrafter"/>
</dbReference>
<dbReference type="GO" id="GO:0070181">
    <property type="term" value="F:small ribosomal subunit rRNA binding"/>
    <property type="evidence" value="ECO:0007669"/>
    <property type="project" value="TreeGrafter"/>
</dbReference>
<dbReference type="GO" id="GO:0003735">
    <property type="term" value="F:structural constituent of ribosome"/>
    <property type="evidence" value="ECO:0007669"/>
    <property type="project" value="InterPro"/>
</dbReference>
<dbReference type="GO" id="GO:0006412">
    <property type="term" value="P:translation"/>
    <property type="evidence" value="ECO:0007669"/>
    <property type="project" value="UniProtKB-UniRule"/>
</dbReference>
<dbReference type="FunFam" id="4.10.640.10:FF:000003">
    <property type="entry name" value="30S ribosomal protein S18"/>
    <property type="match status" value="1"/>
</dbReference>
<dbReference type="Gene3D" id="4.10.640.10">
    <property type="entry name" value="Ribosomal protein S18"/>
    <property type="match status" value="1"/>
</dbReference>
<dbReference type="HAMAP" id="MF_00270">
    <property type="entry name" value="Ribosomal_bS18"/>
    <property type="match status" value="1"/>
</dbReference>
<dbReference type="InterPro" id="IPR001648">
    <property type="entry name" value="Ribosomal_bS18"/>
</dbReference>
<dbReference type="InterPro" id="IPR018275">
    <property type="entry name" value="Ribosomal_bS18_CS"/>
</dbReference>
<dbReference type="InterPro" id="IPR036870">
    <property type="entry name" value="Ribosomal_bS18_sf"/>
</dbReference>
<dbReference type="NCBIfam" id="TIGR00165">
    <property type="entry name" value="S18"/>
    <property type="match status" value="1"/>
</dbReference>
<dbReference type="PANTHER" id="PTHR13479">
    <property type="entry name" value="30S RIBOSOMAL PROTEIN S18"/>
    <property type="match status" value="1"/>
</dbReference>
<dbReference type="PANTHER" id="PTHR13479:SF40">
    <property type="entry name" value="SMALL RIBOSOMAL SUBUNIT PROTEIN BS18M"/>
    <property type="match status" value="1"/>
</dbReference>
<dbReference type="Pfam" id="PF01084">
    <property type="entry name" value="Ribosomal_S18"/>
    <property type="match status" value="1"/>
</dbReference>
<dbReference type="PRINTS" id="PR00974">
    <property type="entry name" value="RIBOSOMALS18"/>
</dbReference>
<dbReference type="SUPFAM" id="SSF46911">
    <property type="entry name" value="Ribosomal protein S18"/>
    <property type="match status" value="1"/>
</dbReference>
<dbReference type="PROSITE" id="PS00057">
    <property type="entry name" value="RIBOSOMAL_S18"/>
    <property type="match status" value="1"/>
</dbReference>
<feature type="chain" id="PRO_0000411530" description="Small ribosomal subunit protein bS18">
    <location>
        <begin position="1"/>
        <end position="79"/>
    </location>
</feature>
<keyword id="KW-0687">Ribonucleoprotein</keyword>
<keyword id="KW-0689">Ribosomal protein</keyword>
<keyword id="KW-0694">RNA-binding</keyword>
<keyword id="KW-0699">rRNA-binding</keyword>
<comment type="function">
    <text evidence="1">Binds as a heterodimer with protein bS6 to the central domain of the 16S rRNA, where it helps stabilize the platform of the 30S subunit.</text>
</comment>
<comment type="subunit">
    <text evidence="1">Part of the 30S ribosomal subunit. Forms a tight heterodimer with protein bS6.</text>
</comment>
<comment type="similarity">
    <text evidence="1">Belongs to the bacterial ribosomal protein bS18 family.</text>
</comment>
<reference key="1">
    <citation type="journal article" date="2003" name="Genome Res.">
        <title>Genome sequence of an M3 strain of Streptococcus pyogenes reveals a large-scale genomic rearrangement in invasive strains and new insights into phage evolution.</title>
        <authorList>
            <person name="Nakagawa I."/>
            <person name="Kurokawa K."/>
            <person name="Yamashita A."/>
            <person name="Nakata M."/>
            <person name="Tomiyasu Y."/>
            <person name="Okahashi N."/>
            <person name="Kawabata S."/>
            <person name="Yamazaki K."/>
            <person name="Shiba T."/>
            <person name="Yasunaga T."/>
            <person name="Hayashi H."/>
            <person name="Hattori M."/>
            <person name="Hamada S."/>
        </authorList>
    </citation>
    <scope>NUCLEOTIDE SEQUENCE [LARGE SCALE GENOMIC DNA]</scope>
    <source>
        <strain>SSI-1</strain>
    </source>
</reference>
<proteinExistence type="inferred from homology"/>
<organism>
    <name type="scientific">Streptococcus pyogenes serotype M3 (strain SSI-1)</name>
    <dbReference type="NCBI Taxonomy" id="193567"/>
    <lineage>
        <taxon>Bacteria</taxon>
        <taxon>Bacillati</taxon>
        <taxon>Bacillota</taxon>
        <taxon>Bacilli</taxon>
        <taxon>Lactobacillales</taxon>
        <taxon>Streptococcaceae</taxon>
        <taxon>Streptococcus</taxon>
    </lineage>
</organism>
<accession>P0DE81</accession>
<accession>P66476</accession>
<accession>Q99Y81</accession>